<organism>
    <name type="scientific">Enterobacteria phage T4</name>
    <name type="common">Bacteriophage T4</name>
    <dbReference type="NCBI Taxonomy" id="10665"/>
    <lineage>
        <taxon>Viruses</taxon>
        <taxon>Duplodnaviria</taxon>
        <taxon>Heunggongvirae</taxon>
        <taxon>Uroviricota</taxon>
        <taxon>Caudoviricetes</taxon>
        <taxon>Straboviridae</taxon>
        <taxon>Tevenvirinae</taxon>
        <taxon>Tequatrovirus</taxon>
    </lineage>
</organism>
<name>ALC_BPT4</name>
<dbReference type="EMBL" id="X03193">
    <property type="protein sequence ID" value="CAA26950.1"/>
    <property type="molecule type" value="Genomic_DNA"/>
</dbReference>
<dbReference type="EMBL" id="AF158101">
    <property type="protein sequence ID" value="AAD42532.1"/>
    <property type="molecule type" value="Genomic_DNA"/>
</dbReference>
<dbReference type="EMBL" id="M14731">
    <property type="status" value="NOT_ANNOTATED_CDS"/>
    <property type="molecule type" value="Genomic_DNA"/>
</dbReference>
<dbReference type="PIR" id="A04337">
    <property type="entry name" value="ZXBPAL"/>
</dbReference>
<dbReference type="RefSeq" id="NP_049838.1">
    <property type="nucleotide sequence ID" value="NC_000866.4"/>
</dbReference>
<dbReference type="GeneID" id="1258715"/>
<dbReference type="KEGG" id="vg:1258715"/>
<dbReference type="OrthoDB" id="10366at10239"/>
<dbReference type="Proteomes" id="UP000009087">
    <property type="component" value="Segment"/>
</dbReference>
<dbReference type="GO" id="GO:0003677">
    <property type="term" value="F:DNA binding"/>
    <property type="evidence" value="ECO:0007669"/>
    <property type="project" value="UniProtKB-KW"/>
</dbReference>
<dbReference type="GO" id="GO:0039657">
    <property type="term" value="P:symbiont-mediated suppression of host gene expression"/>
    <property type="evidence" value="ECO:0007669"/>
    <property type="project" value="UniProtKB-KW"/>
</dbReference>
<dbReference type="GO" id="GO:0039653">
    <property type="term" value="P:symbiont-mediated suppression of host transcription"/>
    <property type="evidence" value="ECO:0000315"/>
    <property type="project" value="CACAO"/>
</dbReference>
<dbReference type="InterPro" id="IPR020367">
    <property type="entry name" value="Host_transcript_inhib_Alc"/>
</dbReference>
<dbReference type="Pfam" id="PF17527">
    <property type="entry name" value="ALC"/>
    <property type="match status" value="1"/>
</dbReference>
<feature type="chain" id="PRO_0000164915" description="Protein alc">
    <location>
        <begin position="1"/>
        <end position="167"/>
    </location>
</feature>
<feature type="sequence conflict" description="In Ref. 1; CAA26950." evidence="3" ref="1">
    <original>C</original>
    <variation>Y</variation>
    <location>
        <position position="104"/>
    </location>
</feature>
<reference key="1">
    <citation type="journal article" date="1984" name="Genetics">
        <title>Identification and characterization of the alc gene product of bacteriophage T4.</title>
        <authorList>
            <person name="Kutter E.M."/>
            <person name="Drivdahl R."/>
            <person name="Rand K."/>
        </authorList>
    </citation>
    <scope>NUCLEOTIDE SEQUENCE [GENOMIC DNA]</scope>
</reference>
<reference key="2">
    <citation type="journal article" date="2003" name="Microbiol. Mol. Biol. Rev.">
        <title>Bacteriophage T4 genome.</title>
        <authorList>
            <person name="Miller E.S."/>
            <person name="Kutter E."/>
            <person name="Mosig G."/>
            <person name="Arisaka F."/>
            <person name="Kunisawa T."/>
            <person name="Ruger W."/>
        </authorList>
    </citation>
    <scope>NUCLEOTIDE SEQUENCE [LARGE SCALE GENOMIC DNA]</scope>
</reference>
<reference key="3">
    <citation type="journal article" date="1986" name="J. Bacteriol.">
        <title>Molecular proof that bacteriophage T4 alc and unf genes are the same gene.</title>
        <authorList>
            <person name="Snyder L."/>
            <person name="Jorissen L."/>
        </authorList>
    </citation>
    <scope>NUCLEOTIDE SEQUENCE [GENOMIC DNA] OF 55-136</scope>
</reference>
<reference key="4">
    <citation type="journal article" date="1990" name="J. Bacteriol.">
        <title>Inhibition of transcription of cytosine-containing DNA in vitro by the alc gene product of bacteriophage T4.</title>
        <authorList>
            <person name="Drivdahl R.H."/>
            <person name="Kutter E.M."/>
        </authorList>
    </citation>
    <scope>FUNCTION</scope>
</reference>
<reference key="5">
    <citation type="journal article" date="1993" name="Cell">
        <title>Bacteriophage T4 Alc protein: a transcription termination factor sensing local modification of DNA.</title>
        <authorList>
            <person name="Kashlev M."/>
            <person name="Nudler E."/>
            <person name="Goldfarb A."/>
            <person name="White T."/>
            <person name="Kutter E."/>
        </authorList>
    </citation>
    <scope>FUNCTION</scope>
</reference>
<reference key="6">
    <citation type="book" date="1994" name="Molecular biology of bacteriophage T4">
        <editorList>
            <person name="Karam J.D."/>
        </editorList>
        <authorList>
            <person name="Kutter E.M."/>
            <person name="White T."/>
            <person name="Kashlev M."/>
            <person name="Uzan M."/>
            <person name="McKinney J."/>
            <person name="Guttman B."/>
        </authorList>
    </citation>
    <scope>REVIEW</scope>
</reference>
<evidence type="ECO:0000269" key="1">
    <source>
    </source>
</evidence>
<evidence type="ECO:0000269" key="2">
    <source>
    </source>
</evidence>
<evidence type="ECO:0000305" key="3"/>
<gene>
    <name type="primary">alc</name>
    <name type="synonym">unf</name>
</gene>
<protein>
    <recommendedName>
        <fullName>Protein alc</fullName>
    </recommendedName>
    <alternativeName>
        <fullName>Protein unf</fullName>
    </alternativeName>
</protein>
<organismHost>
    <name type="scientific">Escherichia coli</name>
    <dbReference type="NCBI Taxonomy" id="562"/>
</organismHost>
<sequence>MDLQLITTEMVVEAYGDTTDGISVFKGNRRVGYITGLKKDLAKQVKRKTTIKEYRNRRLEQARDMLPDAVEEMKVFLENQLAKYDCEVFINQTQPNVHINSCKCYIIVNPLTGKHRLGISNPNRSASDMAEDVEACFKISKSPAEHHILINGLSQDDIVEVIKTLCM</sequence>
<accession>P04546</accession>
<comment type="function">
    <text evidence="1 2">Participates in the host transcription shutoff by causing premature termination of transcription from host DNA. Acts as a site-specific termination factor that abolishes transcript elongation on cytosine-containing DNA but not on the 5-hydroxymethyl cytosine present in the viral DNA. Therefore inhibits as well transcription from other phages that contain cytosine in their DNA.</text>
</comment>
<proteinExistence type="predicted"/>
<keyword id="KW-1261">Bacterial host gene expression shutoff by virus</keyword>
<keyword id="KW-1263">Bacterial host transcription shutoff by virus</keyword>
<keyword id="KW-0238">DNA-binding</keyword>
<keyword id="KW-1190">Host gene expression shutoff by virus</keyword>
<keyword id="KW-0945">Host-virus interaction</keyword>
<keyword id="KW-1185">Reference proteome</keyword>